<name>QUEE_METJA</name>
<sequence length="243" mass="28280">MIREIFNSIMGEGKYIGRRFIFVRFAGCPLNCVYCDEESKGYFNRVEKIPGSGEFETLQKMEIEDIINAIDKLKTPDLFAVSFTGGEPLLYHKQIKEIAEILKDKGYRTFLESNGMFPERIFYFDIASIDIKLKEHFEYIKDEDYEKLYKNELKTIKKLYNLNSDIYAKVVIMEETNIEDVKIIAKDLSDIGNITLCIQPVTPHGNIKSPSQRKLFEIMEACGEYLKDNVMLTIQMHKYLGML</sequence>
<feature type="chain" id="PRO_0000107457" description="7-carboxy-7-deazaguanine synthase">
    <location>
        <begin position="1"/>
        <end position="243"/>
    </location>
</feature>
<feature type="domain" description="Radical SAM core" evidence="2">
    <location>
        <begin position="15"/>
        <end position="243"/>
    </location>
</feature>
<feature type="binding site" evidence="1">
    <location>
        <begin position="9"/>
        <end position="11"/>
    </location>
    <ligand>
        <name>substrate</name>
    </ligand>
</feature>
<feature type="binding site" evidence="1">
    <location>
        <position position="24"/>
    </location>
    <ligand>
        <name>substrate</name>
    </ligand>
</feature>
<feature type="binding site" evidence="1">
    <location>
        <position position="28"/>
    </location>
    <ligand>
        <name>[4Fe-4S] cluster</name>
        <dbReference type="ChEBI" id="CHEBI:49883"/>
        <note>4Fe-4S-S-AdoMet</note>
    </ligand>
</feature>
<feature type="binding site" evidence="1">
    <location>
        <position position="32"/>
    </location>
    <ligand>
        <name>[4Fe-4S] cluster</name>
        <dbReference type="ChEBI" id="CHEBI:49883"/>
        <note>4Fe-4S-S-AdoMet</note>
    </ligand>
</feature>
<feature type="binding site" evidence="1">
    <location>
        <position position="35"/>
    </location>
    <ligand>
        <name>[4Fe-4S] cluster</name>
        <dbReference type="ChEBI" id="CHEBI:49883"/>
        <note>4Fe-4S-S-AdoMet</note>
    </ligand>
</feature>
<feature type="binding site" evidence="1">
    <location>
        <position position="84"/>
    </location>
    <ligand>
        <name>substrate</name>
    </ligand>
</feature>
<feature type="binding site" evidence="1">
    <location>
        <position position="86"/>
    </location>
    <ligand>
        <name>S-adenosyl-L-methionine</name>
        <dbReference type="ChEBI" id="CHEBI:59789"/>
    </ligand>
</feature>
<gene>
    <name evidence="1" type="primary">queE</name>
    <name type="ordered locus">MJ1645</name>
</gene>
<keyword id="KW-0004">4Fe-4S</keyword>
<keyword id="KW-0408">Iron</keyword>
<keyword id="KW-0411">Iron-sulfur</keyword>
<keyword id="KW-0456">Lyase</keyword>
<keyword id="KW-0460">Magnesium</keyword>
<keyword id="KW-0479">Metal-binding</keyword>
<keyword id="KW-1185">Reference proteome</keyword>
<keyword id="KW-0949">S-adenosyl-L-methionine</keyword>
<organism>
    <name type="scientific">Methanocaldococcus jannaschii (strain ATCC 43067 / DSM 2661 / JAL-1 / JCM 10045 / NBRC 100440)</name>
    <name type="common">Methanococcus jannaschii</name>
    <dbReference type="NCBI Taxonomy" id="243232"/>
    <lineage>
        <taxon>Archaea</taxon>
        <taxon>Methanobacteriati</taxon>
        <taxon>Methanobacteriota</taxon>
        <taxon>Methanomada group</taxon>
        <taxon>Methanococci</taxon>
        <taxon>Methanococcales</taxon>
        <taxon>Methanocaldococcaceae</taxon>
        <taxon>Methanocaldococcus</taxon>
    </lineage>
</organism>
<comment type="function">
    <text evidence="1">Catalyzes the complex heterocyclic radical-mediated conversion of 6-carboxy-5,6,7,8-tetrahydropterin (CPH4) to 7-carboxy-7-deazaguanine (CDG), a step common to the biosynthetic pathways of all 7-deazapurine-containing compounds.</text>
</comment>
<comment type="catalytic activity">
    <reaction evidence="1">
        <text>6-carboxy-5,6,7,8-tetrahydropterin + H(+) = 7-carboxy-7-deazaguanine + NH4(+)</text>
        <dbReference type="Rhea" id="RHEA:27974"/>
        <dbReference type="ChEBI" id="CHEBI:15378"/>
        <dbReference type="ChEBI" id="CHEBI:28938"/>
        <dbReference type="ChEBI" id="CHEBI:61032"/>
        <dbReference type="ChEBI" id="CHEBI:61036"/>
        <dbReference type="EC" id="4.3.99.3"/>
    </reaction>
</comment>
<comment type="cofactor">
    <cofactor evidence="1">
        <name>[4Fe-4S] cluster</name>
        <dbReference type="ChEBI" id="CHEBI:49883"/>
    </cofactor>
    <text evidence="1">Binds 1 [4Fe-4S] cluster. The cluster is coordinated with 3 cysteines and an exchangeable S-adenosyl-L-methionine.</text>
</comment>
<comment type="cofactor">
    <cofactor evidence="1">
        <name>S-adenosyl-L-methionine</name>
        <dbReference type="ChEBI" id="CHEBI:59789"/>
    </cofactor>
    <text evidence="1">Binds 1 S-adenosyl-L-methionine per subunit.</text>
</comment>
<comment type="cofactor">
    <cofactor evidence="1">
        <name>Mg(2+)</name>
        <dbReference type="ChEBI" id="CHEBI:18420"/>
    </cofactor>
</comment>
<comment type="pathway">
    <text evidence="1">Purine metabolism; 7-cyano-7-deazaguanine biosynthesis.</text>
</comment>
<comment type="subunit">
    <text evidence="1">Homodimer.</text>
</comment>
<comment type="similarity">
    <text evidence="1">Belongs to the radical SAM superfamily. 7-carboxy-7-deazaguanine synthase family.</text>
</comment>
<reference key="1">
    <citation type="journal article" date="1996" name="Science">
        <title>Complete genome sequence of the methanogenic archaeon, Methanococcus jannaschii.</title>
        <authorList>
            <person name="Bult C.J."/>
            <person name="White O."/>
            <person name="Olsen G.J."/>
            <person name="Zhou L."/>
            <person name="Fleischmann R.D."/>
            <person name="Sutton G.G."/>
            <person name="Blake J.A."/>
            <person name="FitzGerald L.M."/>
            <person name="Clayton R.A."/>
            <person name="Gocayne J.D."/>
            <person name="Kerlavage A.R."/>
            <person name="Dougherty B.A."/>
            <person name="Tomb J.-F."/>
            <person name="Adams M.D."/>
            <person name="Reich C.I."/>
            <person name="Overbeek R."/>
            <person name="Kirkness E.F."/>
            <person name="Weinstock K.G."/>
            <person name="Merrick J.M."/>
            <person name="Glodek A."/>
            <person name="Scott J.L."/>
            <person name="Geoghagen N.S.M."/>
            <person name="Weidman J.F."/>
            <person name="Fuhrmann J.L."/>
            <person name="Nguyen D."/>
            <person name="Utterback T.R."/>
            <person name="Kelley J.M."/>
            <person name="Peterson J.D."/>
            <person name="Sadow P.W."/>
            <person name="Hanna M.C."/>
            <person name="Cotton M.D."/>
            <person name="Roberts K.M."/>
            <person name="Hurst M.A."/>
            <person name="Kaine B.P."/>
            <person name="Borodovsky M."/>
            <person name="Klenk H.-P."/>
            <person name="Fraser C.M."/>
            <person name="Smith H.O."/>
            <person name="Woese C.R."/>
            <person name="Venter J.C."/>
        </authorList>
    </citation>
    <scope>NUCLEOTIDE SEQUENCE [LARGE SCALE GENOMIC DNA]</scope>
    <source>
        <strain>ATCC 43067 / DSM 2661 / JAL-1 / JCM 10045 / NBRC 100440</strain>
    </source>
</reference>
<proteinExistence type="inferred from homology"/>
<accession>Q59039</accession>
<dbReference type="EC" id="4.3.99.3" evidence="1"/>
<dbReference type="EMBL" id="L77117">
    <property type="protein sequence ID" value="AAB99666.1"/>
    <property type="molecule type" value="Genomic_DNA"/>
</dbReference>
<dbReference type="PIR" id="C64505">
    <property type="entry name" value="C64505"/>
</dbReference>
<dbReference type="RefSeq" id="WP_010871169.1">
    <property type="nucleotide sequence ID" value="NC_000909.1"/>
</dbReference>
<dbReference type="SMR" id="Q59039"/>
<dbReference type="FunCoup" id="Q59039">
    <property type="interactions" value="1"/>
</dbReference>
<dbReference type="STRING" id="243232.MJ_1645"/>
<dbReference type="PaxDb" id="243232-MJ_1645"/>
<dbReference type="EnsemblBacteria" id="AAB99666">
    <property type="protein sequence ID" value="AAB99666"/>
    <property type="gene ID" value="MJ_1645"/>
</dbReference>
<dbReference type="GeneID" id="1452554"/>
<dbReference type="KEGG" id="mja:MJ_1645"/>
<dbReference type="eggNOG" id="arCOG02173">
    <property type="taxonomic scope" value="Archaea"/>
</dbReference>
<dbReference type="HOGENOM" id="CLU_066739_1_0_2"/>
<dbReference type="InParanoid" id="Q59039"/>
<dbReference type="OrthoDB" id="7980at2157"/>
<dbReference type="PhylomeDB" id="Q59039"/>
<dbReference type="UniPathway" id="UPA00391"/>
<dbReference type="Proteomes" id="UP000000805">
    <property type="component" value="Chromosome"/>
</dbReference>
<dbReference type="GO" id="GO:0051539">
    <property type="term" value="F:4 iron, 4 sulfur cluster binding"/>
    <property type="evidence" value="ECO:0007669"/>
    <property type="project" value="UniProtKB-UniRule"/>
</dbReference>
<dbReference type="GO" id="GO:0016840">
    <property type="term" value="F:carbon-nitrogen lyase activity"/>
    <property type="evidence" value="ECO:0007669"/>
    <property type="project" value="UniProtKB-UniRule"/>
</dbReference>
<dbReference type="GO" id="GO:0000287">
    <property type="term" value="F:magnesium ion binding"/>
    <property type="evidence" value="ECO:0007669"/>
    <property type="project" value="UniProtKB-UniRule"/>
</dbReference>
<dbReference type="GO" id="GO:1904047">
    <property type="term" value="F:S-adenosyl-L-methionine binding"/>
    <property type="evidence" value="ECO:0007669"/>
    <property type="project" value="UniProtKB-UniRule"/>
</dbReference>
<dbReference type="CDD" id="cd01335">
    <property type="entry name" value="Radical_SAM"/>
    <property type="match status" value="1"/>
</dbReference>
<dbReference type="Gene3D" id="3.20.20.70">
    <property type="entry name" value="Aldolase class I"/>
    <property type="match status" value="1"/>
</dbReference>
<dbReference type="HAMAP" id="MF_00917">
    <property type="entry name" value="QueE"/>
    <property type="match status" value="1"/>
</dbReference>
<dbReference type="InterPro" id="IPR024924">
    <property type="entry name" value="7-CO-7-deazaguanine_synth-like"/>
</dbReference>
<dbReference type="InterPro" id="IPR013785">
    <property type="entry name" value="Aldolase_TIM"/>
</dbReference>
<dbReference type="InterPro" id="IPR007197">
    <property type="entry name" value="rSAM"/>
</dbReference>
<dbReference type="PANTHER" id="PTHR42836">
    <property type="entry name" value="7-CARBOXY-7-DEAZAGUANINE SYNTHASE"/>
    <property type="match status" value="1"/>
</dbReference>
<dbReference type="PANTHER" id="PTHR42836:SF1">
    <property type="entry name" value="7-CARBOXY-7-DEAZAGUANINE SYNTHASE"/>
    <property type="match status" value="1"/>
</dbReference>
<dbReference type="Pfam" id="PF13353">
    <property type="entry name" value="Fer4_12"/>
    <property type="match status" value="1"/>
</dbReference>
<dbReference type="Pfam" id="PF04055">
    <property type="entry name" value="Radical_SAM"/>
    <property type="match status" value="1"/>
</dbReference>
<dbReference type="PIRSF" id="PIRSF000370">
    <property type="entry name" value="QueE"/>
    <property type="match status" value="1"/>
</dbReference>
<dbReference type="SFLD" id="SFLDS00029">
    <property type="entry name" value="Radical_SAM"/>
    <property type="match status" value="1"/>
</dbReference>
<dbReference type="SFLD" id="SFLDG01067">
    <property type="entry name" value="SPASM/twitch_domain_containing"/>
    <property type="match status" value="1"/>
</dbReference>
<dbReference type="SUPFAM" id="SSF102114">
    <property type="entry name" value="Radical SAM enzymes"/>
    <property type="match status" value="1"/>
</dbReference>
<dbReference type="PROSITE" id="PS51918">
    <property type="entry name" value="RADICAL_SAM"/>
    <property type="match status" value="1"/>
</dbReference>
<protein>
    <recommendedName>
        <fullName evidence="1">7-carboxy-7-deazaguanine synthase</fullName>
        <shortName evidence="1">CDG synthase</shortName>
        <ecNumber evidence="1">4.3.99.3</ecNumber>
    </recommendedName>
    <alternativeName>
        <fullName evidence="1">Archaeosine biosynthesis protein QueE</fullName>
    </alternativeName>
</protein>
<evidence type="ECO:0000255" key="1">
    <source>
        <dbReference type="HAMAP-Rule" id="MF_00917"/>
    </source>
</evidence>
<evidence type="ECO:0000255" key="2">
    <source>
        <dbReference type="PROSITE-ProRule" id="PRU01266"/>
    </source>
</evidence>